<reference key="1">
    <citation type="journal article" date="2007" name="J. Bacteriol.">
        <title>The genome sequence of avian pathogenic Escherichia coli strain O1:K1:H7 shares strong similarities with human extraintestinal pathogenic E. coli genomes.</title>
        <authorList>
            <person name="Johnson T.J."/>
            <person name="Kariyawasam S."/>
            <person name="Wannemuehler Y."/>
            <person name="Mangiamele P."/>
            <person name="Johnson S.J."/>
            <person name="Doetkott C."/>
            <person name="Skyberg J.A."/>
            <person name="Lynne A.M."/>
            <person name="Johnson J.R."/>
            <person name="Nolan L.K."/>
        </authorList>
    </citation>
    <scope>NUCLEOTIDE SEQUENCE [LARGE SCALE GENOMIC DNA]</scope>
</reference>
<name>KEFF_ECOK1</name>
<comment type="function">
    <text evidence="1">Regulatory subunit of a potassium efflux system that confers protection against electrophiles. Required for full activity of KefC. Shows redox enzymatic activity, but this enzymatic activity is not required for activation of KefC.</text>
</comment>
<comment type="catalytic activity">
    <reaction evidence="1">
        <text>a quinone + NADH + H(+) = a quinol + NAD(+)</text>
        <dbReference type="Rhea" id="RHEA:46160"/>
        <dbReference type="ChEBI" id="CHEBI:15378"/>
        <dbReference type="ChEBI" id="CHEBI:24646"/>
        <dbReference type="ChEBI" id="CHEBI:57540"/>
        <dbReference type="ChEBI" id="CHEBI:57945"/>
        <dbReference type="ChEBI" id="CHEBI:132124"/>
        <dbReference type="EC" id="1.6.5.2"/>
    </reaction>
</comment>
<comment type="catalytic activity">
    <reaction evidence="1">
        <text>a quinone + NADPH + H(+) = a quinol + NADP(+)</text>
        <dbReference type="Rhea" id="RHEA:46164"/>
        <dbReference type="ChEBI" id="CHEBI:15378"/>
        <dbReference type="ChEBI" id="CHEBI:24646"/>
        <dbReference type="ChEBI" id="CHEBI:57783"/>
        <dbReference type="ChEBI" id="CHEBI:58349"/>
        <dbReference type="ChEBI" id="CHEBI:132124"/>
        <dbReference type="EC" id="1.6.5.2"/>
    </reaction>
</comment>
<comment type="cofactor">
    <cofactor evidence="1">
        <name>FMN</name>
        <dbReference type="ChEBI" id="CHEBI:58210"/>
    </cofactor>
</comment>
<comment type="subunit">
    <text evidence="1">Homodimer. Interacts with KefC.</text>
</comment>
<comment type="subcellular location">
    <subcellularLocation>
        <location evidence="1">Cell inner membrane</location>
        <topology evidence="1">Peripheral membrane protein</topology>
        <orientation evidence="1">Cytoplasmic side</orientation>
    </subcellularLocation>
</comment>
<comment type="similarity">
    <text evidence="1">Belongs to the NAD(P)H dehydrogenase (quinone) family. KefF subfamily.</text>
</comment>
<proteinExistence type="inferred from homology"/>
<accession>A1A795</accession>
<protein>
    <recommendedName>
        <fullName evidence="1">Glutathione-regulated potassium-efflux system ancillary protein KefF</fullName>
    </recommendedName>
    <alternativeName>
        <fullName evidence="1">Quinone oxidoreductase KefF</fullName>
        <ecNumber evidence="1">1.6.5.2</ecNumber>
    </alternativeName>
</protein>
<feature type="chain" id="PRO_1000068465" description="Glutathione-regulated potassium-efflux system ancillary protein KefF">
    <location>
        <begin position="1"/>
        <end position="176"/>
    </location>
</feature>
<feature type="binding site" evidence="1">
    <location>
        <position position="8"/>
    </location>
    <ligand>
        <name>FMN</name>
        <dbReference type="ChEBI" id="CHEBI:58210"/>
    </ligand>
</feature>
<feature type="binding site" evidence="1">
    <location>
        <begin position="14"/>
        <end position="17"/>
    </location>
    <ligand>
        <name>FMN</name>
        <dbReference type="ChEBI" id="CHEBI:58210"/>
    </ligand>
</feature>
<feature type="binding site" evidence="1">
    <location>
        <begin position="65"/>
        <end position="68"/>
    </location>
    <ligand>
        <name>FMN</name>
        <dbReference type="ChEBI" id="CHEBI:58210"/>
    </ligand>
</feature>
<feature type="binding site" evidence="1">
    <location>
        <begin position="105"/>
        <end position="108"/>
    </location>
    <ligand>
        <name>FMN</name>
        <dbReference type="ChEBI" id="CHEBI:58210"/>
    </ligand>
</feature>
<organism>
    <name type="scientific">Escherichia coli O1:K1 / APEC</name>
    <dbReference type="NCBI Taxonomy" id="405955"/>
    <lineage>
        <taxon>Bacteria</taxon>
        <taxon>Pseudomonadati</taxon>
        <taxon>Pseudomonadota</taxon>
        <taxon>Gammaproteobacteria</taxon>
        <taxon>Enterobacterales</taxon>
        <taxon>Enterobacteriaceae</taxon>
        <taxon>Escherichia</taxon>
    </lineage>
</organism>
<dbReference type="EC" id="1.6.5.2" evidence="1"/>
<dbReference type="EMBL" id="CP000468">
    <property type="protein sequence ID" value="ABI99534.1"/>
    <property type="molecule type" value="Genomic_DNA"/>
</dbReference>
<dbReference type="RefSeq" id="WP_000600749.1">
    <property type="nucleotide sequence ID" value="NZ_CADILS010000013.1"/>
</dbReference>
<dbReference type="SMR" id="A1A795"/>
<dbReference type="KEGG" id="ecv:APECO1_1936"/>
<dbReference type="HOGENOM" id="CLU_058643_0_1_6"/>
<dbReference type="Proteomes" id="UP000008216">
    <property type="component" value="Chromosome"/>
</dbReference>
<dbReference type="GO" id="GO:0005886">
    <property type="term" value="C:plasma membrane"/>
    <property type="evidence" value="ECO:0007669"/>
    <property type="project" value="UniProtKB-SubCell"/>
</dbReference>
<dbReference type="GO" id="GO:0009055">
    <property type="term" value="F:electron transfer activity"/>
    <property type="evidence" value="ECO:0007669"/>
    <property type="project" value="TreeGrafter"/>
</dbReference>
<dbReference type="GO" id="GO:0010181">
    <property type="term" value="F:FMN binding"/>
    <property type="evidence" value="ECO:0007669"/>
    <property type="project" value="UniProtKB-UniRule"/>
</dbReference>
<dbReference type="GO" id="GO:0050136">
    <property type="term" value="F:NADH:ubiquinone reductase (non-electrogenic) activity"/>
    <property type="evidence" value="ECO:0007669"/>
    <property type="project" value="RHEA"/>
</dbReference>
<dbReference type="GO" id="GO:0008753">
    <property type="term" value="F:NADPH dehydrogenase (quinone) activity"/>
    <property type="evidence" value="ECO:0007669"/>
    <property type="project" value="RHEA"/>
</dbReference>
<dbReference type="GO" id="GO:1901381">
    <property type="term" value="P:positive regulation of potassium ion transmembrane transport"/>
    <property type="evidence" value="ECO:0007669"/>
    <property type="project" value="UniProtKB-UniRule"/>
</dbReference>
<dbReference type="GO" id="GO:0006813">
    <property type="term" value="P:potassium ion transport"/>
    <property type="evidence" value="ECO:0007669"/>
    <property type="project" value="InterPro"/>
</dbReference>
<dbReference type="FunFam" id="3.40.50.360:FF:000008">
    <property type="entry name" value="Glutathione-regulated potassium-efflux system ancillary protein KefF"/>
    <property type="match status" value="1"/>
</dbReference>
<dbReference type="Gene3D" id="3.40.50.360">
    <property type="match status" value="1"/>
</dbReference>
<dbReference type="HAMAP" id="MF_01414">
    <property type="entry name" value="K_H_efflux_KefF"/>
    <property type="match status" value="1"/>
</dbReference>
<dbReference type="InterPro" id="IPR003680">
    <property type="entry name" value="Flavodoxin_fold"/>
</dbReference>
<dbReference type="InterPro" id="IPR029039">
    <property type="entry name" value="Flavoprotein-like_sf"/>
</dbReference>
<dbReference type="InterPro" id="IPR023948">
    <property type="entry name" value="K_H_efflux_KefF"/>
</dbReference>
<dbReference type="InterPro" id="IPR046980">
    <property type="entry name" value="KefG/KefF"/>
</dbReference>
<dbReference type="NCBIfam" id="NF002044">
    <property type="entry name" value="PRK00871.1"/>
    <property type="match status" value="1"/>
</dbReference>
<dbReference type="PANTHER" id="PTHR47307:SF2">
    <property type="entry name" value="GLUTATHIONE-REGULATED POTASSIUM-EFFLUX SYSTEM ANCILLARY PROTEIN KEFF"/>
    <property type="match status" value="1"/>
</dbReference>
<dbReference type="PANTHER" id="PTHR47307">
    <property type="entry name" value="GLUTATHIONE-REGULATED POTASSIUM-EFFLUX SYSTEM ANCILLARY PROTEIN KEFG"/>
    <property type="match status" value="1"/>
</dbReference>
<dbReference type="Pfam" id="PF02525">
    <property type="entry name" value="Flavodoxin_2"/>
    <property type="match status" value="1"/>
</dbReference>
<dbReference type="SUPFAM" id="SSF52218">
    <property type="entry name" value="Flavoproteins"/>
    <property type="match status" value="1"/>
</dbReference>
<evidence type="ECO:0000255" key="1">
    <source>
        <dbReference type="HAMAP-Rule" id="MF_01414"/>
    </source>
</evidence>
<keyword id="KW-0997">Cell inner membrane</keyword>
<keyword id="KW-1003">Cell membrane</keyword>
<keyword id="KW-0285">Flavoprotein</keyword>
<keyword id="KW-0288">FMN</keyword>
<keyword id="KW-0472">Membrane</keyword>
<keyword id="KW-0520">NAD</keyword>
<keyword id="KW-0560">Oxidoreductase</keyword>
<keyword id="KW-1185">Reference proteome</keyword>
<sequence>MILIIYAHPYPHYSHANKRMLEQARTLEGVEIRSLYQLYPDFNIDIAAEQEALSRADLIVWQHPMQWYSIPPLLKLWIDKVFSHGWAYGHGGTALHGKHLLWAVTTGGGESHFEIGAHPGFDVLSQPLQATAIYCGLNWLPPFAMHCTFICDDETLEGQARHYKQRLLEWQEAHHG</sequence>
<gene>
    <name evidence="1" type="primary">kefF</name>
    <name type="ordered locus">Ecok1_00410</name>
    <name type="ORF">APECO1_1936</name>
</gene>